<gene>
    <name evidence="1" type="primary">obg</name>
    <name type="ordered locus">LMHCC_1032</name>
</gene>
<comment type="function">
    <text evidence="1">An essential GTPase which binds GTP, GDP and possibly (p)ppGpp with moderate affinity, with high nucleotide exchange rates and a fairly low GTP hydrolysis rate. Plays a role in control of the cell cycle, stress response, ribosome biogenesis and in those bacteria that undergo differentiation, in morphogenesis control.</text>
</comment>
<comment type="cofactor">
    <cofactor evidence="1">
        <name>Mg(2+)</name>
        <dbReference type="ChEBI" id="CHEBI:18420"/>
    </cofactor>
</comment>
<comment type="subunit">
    <text evidence="1">Monomer.</text>
</comment>
<comment type="subcellular location">
    <subcellularLocation>
        <location evidence="1">Cytoplasm</location>
    </subcellularLocation>
</comment>
<comment type="similarity">
    <text evidence="1">Belongs to the TRAFAC class OBG-HflX-like GTPase superfamily. OBG GTPase family.</text>
</comment>
<organism>
    <name type="scientific">Listeria monocytogenes serotype 4a (strain HCC23)</name>
    <dbReference type="NCBI Taxonomy" id="552536"/>
    <lineage>
        <taxon>Bacteria</taxon>
        <taxon>Bacillati</taxon>
        <taxon>Bacillota</taxon>
        <taxon>Bacilli</taxon>
        <taxon>Bacillales</taxon>
        <taxon>Listeriaceae</taxon>
        <taxon>Listeria</taxon>
    </lineage>
</organism>
<accession>B8DHL1</accession>
<evidence type="ECO:0000255" key="1">
    <source>
        <dbReference type="HAMAP-Rule" id="MF_01454"/>
    </source>
</evidence>
<evidence type="ECO:0000255" key="2">
    <source>
        <dbReference type="PROSITE-ProRule" id="PRU01229"/>
    </source>
</evidence>
<evidence type="ECO:0000255" key="3">
    <source>
        <dbReference type="PROSITE-ProRule" id="PRU01231"/>
    </source>
</evidence>
<evidence type="ECO:0000256" key="4">
    <source>
        <dbReference type="SAM" id="MobiDB-lite"/>
    </source>
</evidence>
<sequence>MFVDQVKIYVKAGNGGDGMVAFRREKFVPNGGPAGGDGGKGADVVFVVDEGLRTLVDFRFKRIFKAEHGEHGMSKSMHGRGAEDLVVKVPQGTIVKDIDTGEIIADLVAHGQRAVIAKAGRGGRGNKRFATPANPAPELSENGEPGQERNVQLELKVLADVGLVGFPSVGKSTLLSVVSAARPKIAAYHFTTIVPNLGMVDAGDGRSFVMADLPGLIEGASQGVGLGHQFLRHIERTRVIVHVIDMSGSEGRVPYEDYMAINNELEQYNLRLMERPQIIVANKMDMPDAEENLNEFKTKIAEDIPVFPISAVTKTGLRELLLAIADKLETTPEFPLNEILEQEDEDTVLYKYVADEPDFEISREPDGTFVLSGAKIERLFTMTNFERDASISRFARQLRAMGVDEALRKRGAKDGDIVRLLDYEFEFMD</sequence>
<feature type="chain" id="PRO_0000386024" description="GTPase Obg">
    <location>
        <begin position="1"/>
        <end position="429"/>
    </location>
</feature>
<feature type="domain" description="Obg" evidence="3">
    <location>
        <begin position="1"/>
        <end position="158"/>
    </location>
</feature>
<feature type="domain" description="OBG-type G" evidence="1">
    <location>
        <begin position="159"/>
        <end position="329"/>
    </location>
</feature>
<feature type="domain" description="OCT" evidence="2">
    <location>
        <begin position="351"/>
        <end position="429"/>
    </location>
</feature>
<feature type="region of interest" description="Disordered" evidence="4">
    <location>
        <begin position="124"/>
        <end position="145"/>
    </location>
</feature>
<feature type="binding site" evidence="1">
    <location>
        <begin position="165"/>
        <end position="172"/>
    </location>
    <ligand>
        <name>GTP</name>
        <dbReference type="ChEBI" id="CHEBI:37565"/>
    </ligand>
</feature>
<feature type="binding site" evidence="1">
    <location>
        <position position="172"/>
    </location>
    <ligand>
        <name>Mg(2+)</name>
        <dbReference type="ChEBI" id="CHEBI:18420"/>
    </ligand>
</feature>
<feature type="binding site" evidence="1">
    <location>
        <begin position="190"/>
        <end position="194"/>
    </location>
    <ligand>
        <name>GTP</name>
        <dbReference type="ChEBI" id="CHEBI:37565"/>
    </ligand>
</feature>
<feature type="binding site" evidence="1">
    <location>
        <position position="192"/>
    </location>
    <ligand>
        <name>Mg(2+)</name>
        <dbReference type="ChEBI" id="CHEBI:18420"/>
    </ligand>
</feature>
<feature type="binding site" evidence="1">
    <location>
        <begin position="212"/>
        <end position="215"/>
    </location>
    <ligand>
        <name>GTP</name>
        <dbReference type="ChEBI" id="CHEBI:37565"/>
    </ligand>
</feature>
<feature type="binding site" evidence="1">
    <location>
        <begin position="282"/>
        <end position="285"/>
    </location>
    <ligand>
        <name>GTP</name>
        <dbReference type="ChEBI" id="CHEBI:37565"/>
    </ligand>
</feature>
<feature type="binding site" evidence="1">
    <location>
        <begin position="310"/>
        <end position="312"/>
    </location>
    <ligand>
        <name>GTP</name>
        <dbReference type="ChEBI" id="CHEBI:37565"/>
    </ligand>
</feature>
<proteinExistence type="inferred from homology"/>
<keyword id="KW-0963">Cytoplasm</keyword>
<keyword id="KW-0342">GTP-binding</keyword>
<keyword id="KW-0378">Hydrolase</keyword>
<keyword id="KW-0460">Magnesium</keyword>
<keyword id="KW-0479">Metal-binding</keyword>
<keyword id="KW-0547">Nucleotide-binding</keyword>
<name>OBG_LISMH</name>
<reference key="1">
    <citation type="journal article" date="2011" name="J. Bacteriol.">
        <title>Genome sequence of lineage III Listeria monocytogenes strain HCC23.</title>
        <authorList>
            <person name="Steele C.L."/>
            <person name="Donaldson J.R."/>
            <person name="Paul D."/>
            <person name="Banes M.M."/>
            <person name="Arick T."/>
            <person name="Bridges S.M."/>
            <person name="Lawrence M.L."/>
        </authorList>
    </citation>
    <scope>NUCLEOTIDE SEQUENCE [LARGE SCALE GENOMIC DNA]</scope>
    <source>
        <strain>HCC23</strain>
    </source>
</reference>
<dbReference type="EC" id="3.6.5.-" evidence="1"/>
<dbReference type="EMBL" id="CP001175">
    <property type="protein sequence ID" value="ACK39380.1"/>
    <property type="molecule type" value="Genomic_DNA"/>
</dbReference>
<dbReference type="RefSeq" id="WP_012581276.1">
    <property type="nucleotide sequence ID" value="NC_011660.1"/>
</dbReference>
<dbReference type="SMR" id="B8DHL1"/>
<dbReference type="KEGG" id="lmh:LMHCC_1032"/>
<dbReference type="HOGENOM" id="CLU_011747_2_1_9"/>
<dbReference type="GO" id="GO:0005737">
    <property type="term" value="C:cytoplasm"/>
    <property type="evidence" value="ECO:0007669"/>
    <property type="project" value="UniProtKB-SubCell"/>
</dbReference>
<dbReference type="GO" id="GO:0005525">
    <property type="term" value="F:GTP binding"/>
    <property type="evidence" value="ECO:0007669"/>
    <property type="project" value="UniProtKB-UniRule"/>
</dbReference>
<dbReference type="GO" id="GO:0003924">
    <property type="term" value="F:GTPase activity"/>
    <property type="evidence" value="ECO:0007669"/>
    <property type="project" value="UniProtKB-UniRule"/>
</dbReference>
<dbReference type="GO" id="GO:0000287">
    <property type="term" value="F:magnesium ion binding"/>
    <property type="evidence" value="ECO:0007669"/>
    <property type="project" value="InterPro"/>
</dbReference>
<dbReference type="GO" id="GO:0042254">
    <property type="term" value="P:ribosome biogenesis"/>
    <property type="evidence" value="ECO:0007669"/>
    <property type="project" value="UniProtKB-UniRule"/>
</dbReference>
<dbReference type="CDD" id="cd01898">
    <property type="entry name" value="Obg"/>
    <property type="match status" value="1"/>
</dbReference>
<dbReference type="FunFam" id="2.70.210.12:FF:000001">
    <property type="entry name" value="GTPase Obg"/>
    <property type="match status" value="1"/>
</dbReference>
<dbReference type="FunFam" id="3.40.50.300:FF:000515">
    <property type="entry name" value="GTPase Obg"/>
    <property type="match status" value="1"/>
</dbReference>
<dbReference type="Gene3D" id="3.30.300.350">
    <property type="entry name" value="GTP-binding protein OBG, C-terminal domain"/>
    <property type="match status" value="1"/>
</dbReference>
<dbReference type="Gene3D" id="2.70.210.12">
    <property type="entry name" value="GTP1/OBG domain"/>
    <property type="match status" value="1"/>
</dbReference>
<dbReference type="Gene3D" id="3.40.50.300">
    <property type="entry name" value="P-loop containing nucleotide triphosphate hydrolases"/>
    <property type="match status" value="1"/>
</dbReference>
<dbReference type="HAMAP" id="MF_01454">
    <property type="entry name" value="GTPase_Obg"/>
    <property type="match status" value="1"/>
</dbReference>
<dbReference type="InterPro" id="IPR031167">
    <property type="entry name" value="G_OBG"/>
</dbReference>
<dbReference type="InterPro" id="IPR006073">
    <property type="entry name" value="GTP-bd"/>
</dbReference>
<dbReference type="InterPro" id="IPR014100">
    <property type="entry name" value="GTP-bd_Obg/CgtA"/>
</dbReference>
<dbReference type="InterPro" id="IPR036346">
    <property type="entry name" value="GTP-bd_prot_GTP1/OBG_C_sf"/>
</dbReference>
<dbReference type="InterPro" id="IPR006074">
    <property type="entry name" value="GTP1-OBG_CS"/>
</dbReference>
<dbReference type="InterPro" id="IPR006169">
    <property type="entry name" value="GTP1_OBG_dom"/>
</dbReference>
<dbReference type="InterPro" id="IPR036726">
    <property type="entry name" value="GTP1_OBG_dom_sf"/>
</dbReference>
<dbReference type="InterPro" id="IPR045086">
    <property type="entry name" value="OBG_GTPase"/>
</dbReference>
<dbReference type="InterPro" id="IPR015349">
    <property type="entry name" value="OCT_dom"/>
</dbReference>
<dbReference type="InterPro" id="IPR027417">
    <property type="entry name" value="P-loop_NTPase"/>
</dbReference>
<dbReference type="InterPro" id="IPR005225">
    <property type="entry name" value="Small_GTP-bd"/>
</dbReference>
<dbReference type="NCBIfam" id="TIGR02729">
    <property type="entry name" value="Obg_CgtA"/>
    <property type="match status" value="1"/>
</dbReference>
<dbReference type="NCBIfam" id="TIGR03595">
    <property type="entry name" value="Obg_CgtA_exten"/>
    <property type="match status" value="1"/>
</dbReference>
<dbReference type="NCBIfam" id="NF008954">
    <property type="entry name" value="PRK12296.1"/>
    <property type="match status" value="1"/>
</dbReference>
<dbReference type="NCBIfam" id="NF008955">
    <property type="entry name" value="PRK12297.1"/>
    <property type="match status" value="1"/>
</dbReference>
<dbReference type="NCBIfam" id="NF008956">
    <property type="entry name" value="PRK12299.1"/>
    <property type="match status" value="1"/>
</dbReference>
<dbReference type="NCBIfam" id="TIGR00231">
    <property type="entry name" value="small_GTP"/>
    <property type="match status" value="1"/>
</dbReference>
<dbReference type="PANTHER" id="PTHR11702">
    <property type="entry name" value="DEVELOPMENTALLY REGULATED GTP-BINDING PROTEIN-RELATED"/>
    <property type="match status" value="1"/>
</dbReference>
<dbReference type="PANTHER" id="PTHR11702:SF31">
    <property type="entry name" value="MITOCHONDRIAL RIBOSOME-ASSOCIATED GTPASE 2"/>
    <property type="match status" value="1"/>
</dbReference>
<dbReference type="Pfam" id="PF09269">
    <property type="entry name" value="DUF1967"/>
    <property type="match status" value="1"/>
</dbReference>
<dbReference type="Pfam" id="PF01018">
    <property type="entry name" value="GTP1_OBG"/>
    <property type="match status" value="1"/>
</dbReference>
<dbReference type="Pfam" id="PF01926">
    <property type="entry name" value="MMR_HSR1"/>
    <property type="match status" value="1"/>
</dbReference>
<dbReference type="PIRSF" id="PIRSF002401">
    <property type="entry name" value="GTP_bd_Obg/CgtA"/>
    <property type="match status" value="1"/>
</dbReference>
<dbReference type="PRINTS" id="PR00326">
    <property type="entry name" value="GTP1OBG"/>
</dbReference>
<dbReference type="SUPFAM" id="SSF102741">
    <property type="entry name" value="Obg GTP-binding protein C-terminal domain"/>
    <property type="match status" value="1"/>
</dbReference>
<dbReference type="SUPFAM" id="SSF82051">
    <property type="entry name" value="Obg GTP-binding protein N-terminal domain"/>
    <property type="match status" value="1"/>
</dbReference>
<dbReference type="SUPFAM" id="SSF52540">
    <property type="entry name" value="P-loop containing nucleoside triphosphate hydrolases"/>
    <property type="match status" value="1"/>
</dbReference>
<dbReference type="PROSITE" id="PS51710">
    <property type="entry name" value="G_OBG"/>
    <property type="match status" value="1"/>
</dbReference>
<dbReference type="PROSITE" id="PS00905">
    <property type="entry name" value="GTP1_OBG"/>
    <property type="match status" value="1"/>
</dbReference>
<dbReference type="PROSITE" id="PS51883">
    <property type="entry name" value="OBG"/>
    <property type="match status" value="1"/>
</dbReference>
<dbReference type="PROSITE" id="PS51881">
    <property type="entry name" value="OCT"/>
    <property type="match status" value="1"/>
</dbReference>
<protein>
    <recommendedName>
        <fullName evidence="1">GTPase Obg</fullName>
        <ecNumber evidence="1">3.6.5.-</ecNumber>
    </recommendedName>
    <alternativeName>
        <fullName evidence="1">GTP-binding protein Obg</fullName>
    </alternativeName>
</protein>